<dbReference type="EC" id="3.1.-.-" evidence="1"/>
<dbReference type="EMBL" id="CP000901">
    <property type="protein sequence ID" value="ABX87845.1"/>
    <property type="molecule type" value="Genomic_DNA"/>
</dbReference>
<dbReference type="RefSeq" id="WP_002210344.1">
    <property type="nucleotide sequence ID" value="NZ_CP009935.1"/>
</dbReference>
<dbReference type="SMR" id="A9R6Y0"/>
<dbReference type="GeneID" id="57976077"/>
<dbReference type="KEGG" id="ypg:YpAngola_A1832"/>
<dbReference type="PATRIC" id="fig|349746.12.peg.2807"/>
<dbReference type="GO" id="GO:0005737">
    <property type="term" value="C:cytoplasm"/>
    <property type="evidence" value="ECO:0007669"/>
    <property type="project" value="UniProtKB-SubCell"/>
</dbReference>
<dbReference type="GO" id="GO:0004222">
    <property type="term" value="F:metalloendopeptidase activity"/>
    <property type="evidence" value="ECO:0007669"/>
    <property type="project" value="InterPro"/>
</dbReference>
<dbReference type="GO" id="GO:0004521">
    <property type="term" value="F:RNA endonuclease activity"/>
    <property type="evidence" value="ECO:0007669"/>
    <property type="project" value="UniProtKB-UniRule"/>
</dbReference>
<dbReference type="GO" id="GO:0008270">
    <property type="term" value="F:zinc ion binding"/>
    <property type="evidence" value="ECO:0007669"/>
    <property type="project" value="UniProtKB-UniRule"/>
</dbReference>
<dbReference type="GO" id="GO:0006364">
    <property type="term" value="P:rRNA processing"/>
    <property type="evidence" value="ECO:0007669"/>
    <property type="project" value="UniProtKB-UniRule"/>
</dbReference>
<dbReference type="Gene3D" id="3.40.390.30">
    <property type="entry name" value="Metalloproteases ('zincins'), catalytic domain"/>
    <property type="match status" value="1"/>
</dbReference>
<dbReference type="HAMAP" id="MF_00009">
    <property type="entry name" value="Endoribonucl_YbeY"/>
    <property type="match status" value="1"/>
</dbReference>
<dbReference type="InterPro" id="IPR023091">
    <property type="entry name" value="MetalPrtase_cat_dom_sf_prd"/>
</dbReference>
<dbReference type="InterPro" id="IPR002036">
    <property type="entry name" value="YbeY"/>
</dbReference>
<dbReference type="InterPro" id="IPR020549">
    <property type="entry name" value="YbeY_CS"/>
</dbReference>
<dbReference type="NCBIfam" id="TIGR00043">
    <property type="entry name" value="rRNA maturation RNase YbeY"/>
    <property type="match status" value="1"/>
</dbReference>
<dbReference type="PANTHER" id="PTHR46986">
    <property type="entry name" value="ENDORIBONUCLEASE YBEY, CHLOROPLASTIC"/>
    <property type="match status" value="1"/>
</dbReference>
<dbReference type="PANTHER" id="PTHR46986:SF1">
    <property type="entry name" value="ENDORIBONUCLEASE YBEY, CHLOROPLASTIC"/>
    <property type="match status" value="1"/>
</dbReference>
<dbReference type="Pfam" id="PF02130">
    <property type="entry name" value="YbeY"/>
    <property type="match status" value="1"/>
</dbReference>
<dbReference type="SUPFAM" id="SSF55486">
    <property type="entry name" value="Metalloproteases ('zincins'), catalytic domain"/>
    <property type="match status" value="1"/>
</dbReference>
<dbReference type="PROSITE" id="PS01306">
    <property type="entry name" value="UPF0054"/>
    <property type="match status" value="1"/>
</dbReference>
<feature type="chain" id="PRO_1000089232" description="Endoribonuclease YbeY">
    <location>
        <begin position="1"/>
        <end position="157"/>
    </location>
</feature>
<feature type="binding site" evidence="1">
    <location>
        <position position="114"/>
    </location>
    <ligand>
        <name>Zn(2+)</name>
        <dbReference type="ChEBI" id="CHEBI:29105"/>
        <note>catalytic</note>
    </ligand>
</feature>
<feature type="binding site" evidence="1">
    <location>
        <position position="118"/>
    </location>
    <ligand>
        <name>Zn(2+)</name>
        <dbReference type="ChEBI" id="CHEBI:29105"/>
        <note>catalytic</note>
    </ligand>
</feature>
<feature type="binding site" evidence="1">
    <location>
        <position position="124"/>
    </location>
    <ligand>
        <name>Zn(2+)</name>
        <dbReference type="ChEBI" id="CHEBI:29105"/>
        <note>catalytic</note>
    </ligand>
</feature>
<sequence length="157" mass="17745">MSQVILDLQIACADSQGLPTEGDFQRWLEAVLPLFQPVSEVTIRLVDEAESHDLNLTYRGKDKSTNVLSFPFEAPPEIELPLLGDLIICRQVVEKEAIEQEKALLAHWAHMVVHGSLHLLGYDHIDDEEAEEMELIETEIMHGLGYPDPYISEKDPD</sequence>
<gene>
    <name evidence="1" type="primary">ybeY</name>
    <name type="ordered locus">YpAngola_A1832</name>
</gene>
<organism>
    <name type="scientific">Yersinia pestis bv. Antiqua (strain Angola)</name>
    <dbReference type="NCBI Taxonomy" id="349746"/>
    <lineage>
        <taxon>Bacteria</taxon>
        <taxon>Pseudomonadati</taxon>
        <taxon>Pseudomonadota</taxon>
        <taxon>Gammaproteobacteria</taxon>
        <taxon>Enterobacterales</taxon>
        <taxon>Yersiniaceae</taxon>
        <taxon>Yersinia</taxon>
    </lineage>
</organism>
<name>YBEY_YERPG</name>
<proteinExistence type="inferred from homology"/>
<comment type="function">
    <text evidence="1">Single strand-specific metallo-endoribonuclease involved in late-stage 70S ribosome quality control and in maturation of the 3' terminus of the 16S rRNA.</text>
</comment>
<comment type="cofactor">
    <cofactor evidence="1">
        <name>Zn(2+)</name>
        <dbReference type="ChEBI" id="CHEBI:29105"/>
    </cofactor>
    <text evidence="1">Binds 1 zinc ion.</text>
</comment>
<comment type="subcellular location">
    <subcellularLocation>
        <location evidence="1">Cytoplasm</location>
    </subcellularLocation>
</comment>
<comment type="similarity">
    <text evidence="1">Belongs to the endoribonuclease YbeY family.</text>
</comment>
<accession>A9R6Y0</accession>
<evidence type="ECO:0000255" key="1">
    <source>
        <dbReference type="HAMAP-Rule" id="MF_00009"/>
    </source>
</evidence>
<keyword id="KW-0963">Cytoplasm</keyword>
<keyword id="KW-0255">Endonuclease</keyword>
<keyword id="KW-0378">Hydrolase</keyword>
<keyword id="KW-0479">Metal-binding</keyword>
<keyword id="KW-0540">Nuclease</keyword>
<keyword id="KW-0690">Ribosome biogenesis</keyword>
<keyword id="KW-0698">rRNA processing</keyword>
<keyword id="KW-0862">Zinc</keyword>
<reference key="1">
    <citation type="journal article" date="2010" name="J. Bacteriol.">
        <title>Genome sequence of the deep-rooted Yersinia pestis strain Angola reveals new insights into the evolution and pangenome of the plague bacterium.</title>
        <authorList>
            <person name="Eppinger M."/>
            <person name="Worsham P.L."/>
            <person name="Nikolich M.P."/>
            <person name="Riley D.R."/>
            <person name="Sebastian Y."/>
            <person name="Mou S."/>
            <person name="Achtman M."/>
            <person name="Lindler L.E."/>
            <person name="Ravel J."/>
        </authorList>
    </citation>
    <scope>NUCLEOTIDE SEQUENCE [LARGE SCALE GENOMIC DNA]</scope>
    <source>
        <strain>Angola</strain>
    </source>
</reference>
<protein>
    <recommendedName>
        <fullName evidence="1">Endoribonuclease YbeY</fullName>
        <ecNumber evidence="1">3.1.-.-</ecNumber>
    </recommendedName>
</protein>